<comment type="function">
    <text evidence="1">Involved in transcription antitermination. Required for transcription of ribosomal RNA (rRNA) genes. Binds specifically to the boxA antiterminator sequence of the ribosomal RNA (rrn) operons.</text>
</comment>
<comment type="similarity">
    <text evidence="1 2">Belongs to the NusB family.</text>
</comment>
<gene>
    <name evidence="1" type="primary">nusB</name>
    <name type="ordered locus">BU463</name>
</gene>
<proteinExistence type="inferred from homology"/>
<feature type="chain" id="PRO_0000176517" description="Transcription antitermination protein NusB">
    <location>
        <begin position="1"/>
        <end position="143"/>
    </location>
</feature>
<organism>
    <name type="scientific">Buchnera aphidicola subsp. Acyrthosiphon pisum (strain APS)</name>
    <name type="common">Acyrthosiphon pisum symbiotic bacterium</name>
    <dbReference type="NCBI Taxonomy" id="107806"/>
    <lineage>
        <taxon>Bacteria</taxon>
        <taxon>Pseudomonadati</taxon>
        <taxon>Pseudomonadota</taxon>
        <taxon>Gammaproteobacteria</taxon>
        <taxon>Enterobacterales</taxon>
        <taxon>Erwiniaceae</taxon>
        <taxon>Buchnera</taxon>
    </lineage>
</organism>
<sequence length="143" mass="16826">MKPSFRRKARACALQVLYSWEISHNNIKESAIYFLKEKNKKNIDIVYFYELIIGITYDCKNIDNLMKPYLFRSLKELGHIERAILRISFYELHKRNDIPYKVSINEGIELAKLFGSEDSHKFINGVLDKAVFKMGYNKKVVIA</sequence>
<reference key="1">
    <citation type="journal article" date="2000" name="Nature">
        <title>Genome sequence of the endocellular bacterial symbiont of aphids Buchnera sp. APS.</title>
        <authorList>
            <person name="Shigenobu S."/>
            <person name="Watanabe H."/>
            <person name="Hattori M."/>
            <person name="Sakaki Y."/>
            <person name="Ishikawa H."/>
        </authorList>
    </citation>
    <scope>NUCLEOTIDE SEQUENCE [LARGE SCALE GENOMIC DNA]</scope>
    <source>
        <strain>APS</strain>
    </source>
</reference>
<name>NUSB_BUCAI</name>
<keyword id="KW-1185">Reference proteome</keyword>
<keyword id="KW-0694">RNA-binding</keyword>
<keyword id="KW-0804">Transcription</keyword>
<keyword id="KW-0889">Transcription antitermination</keyword>
<keyword id="KW-0805">Transcription regulation</keyword>
<dbReference type="EMBL" id="BA000003">
    <property type="protein sequence ID" value="BAB13160.1"/>
    <property type="molecule type" value="Genomic_DNA"/>
</dbReference>
<dbReference type="RefSeq" id="NP_240274.1">
    <property type="nucleotide sequence ID" value="NC_002528.1"/>
</dbReference>
<dbReference type="RefSeq" id="WP_010896129.1">
    <property type="nucleotide sequence ID" value="NC_002528.1"/>
</dbReference>
<dbReference type="SMR" id="P57535"/>
<dbReference type="STRING" id="563178.BUAP5A_456"/>
<dbReference type="EnsemblBacteria" id="BAB13160">
    <property type="protein sequence ID" value="BAB13160"/>
    <property type="gene ID" value="BAB13160"/>
</dbReference>
<dbReference type="KEGG" id="buc:BU463"/>
<dbReference type="PATRIC" id="fig|107806.10.peg.472"/>
<dbReference type="eggNOG" id="COG0781">
    <property type="taxonomic scope" value="Bacteria"/>
</dbReference>
<dbReference type="HOGENOM" id="CLU_087843_4_1_6"/>
<dbReference type="Proteomes" id="UP000001806">
    <property type="component" value="Chromosome"/>
</dbReference>
<dbReference type="GO" id="GO:0005829">
    <property type="term" value="C:cytosol"/>
    <property type="evidence" value="ECO:0007669"/>
    <property type="project" value="TreeGrafter"/>
</dbReference>
<dbReference type="GO" id="GO:0003723">
    <property type="term" value="F:RNA binding"/>
    <property type="evidence" value="ECO:0007669"/>
    <property type="project" value="UniProtKB-UniRule"/>
</dbReference>
<dbReference type="GO" id="GO:0006353">
    <property type="term" value="P:DNA-templated transcription termination"/>
    <property type="evidence" value="ECO:0007669"/>
    <property type="project" value="UniProtKB-UniRule"/>
</dbReference>
<dbReference type="GO" id="GO:0031564">
    <property type="term" value="P:transcription antitermination"/>
    <property type="evidence" value="ECO:0007669"/>
    <property type="project" value="UniProtKB-KW"/>
</dbReference>
<dbReference type="Gene3D" id="1.10.940.10">
    <property type="entry name" value="NusB-like"/>
    <property type="match status" value="1"/>
</dbReference>
<dbReference type="HAMAP" id="MF_00073">
    <property type="entry name" value="NusB"/>
    <property type="match status" value="1"/>
</dbReference>
<dbReference type="InterPro" id="IPR035926">
    <property type="entry name" value="NusB-like_sf"/>
</dbReference>
<dbReference type="InterPro" id="IPR011605">
    <property type="entry name" value="NusB_fam"/>
</dbReference>
<dbReference type="InterPro" id="IPR006027">
    <property type="entry name" value="NusB_RsmB_TIM44"/>
</dbReference>
<dbReference type="NCBIfam" id="TIGR01951">
    <property type="entry name" value="nusB"/>
    <property type="match status" value="1"/>
</dbReference>
<dbReference type="PANTHER" id="PTHR11078:SF3">
    <property type="entry name" value="ANTITERMINATION NUSB DOMAIN-CONTAINING PROTEIN"/>
    <property type="match status" value="1"/>
</dbReference>
<dbReference type="PANTHER" id="PTHR11078">
    <property type="entry name" value="N UTILIZATION SUBSTANCE PROTEIN B-RELATED"/>
    <property type="match status" value="1"/>
</dbReference>
<dbReference type="Pfam" id="PF01029">
    <property type="entry name" value="NusB"/>
    <property type="match status" value="1"/>
</dbReference>
<dbReference type="SUPFAM" id="SSF48013">
    <property type="entry name" value="NusB-like"/>
    <property type="match status" value="1"/>
</dbReference>
<accession>P57535</accession>
<evidence type="ECO:0000255" key="1">
    <source>
        <dbReference type="HAMAP-Rule" id="MF_00073"/>
    </source>
</evidence>
<evidence type="ECO:0000305" key="2"/>
<protein>
    <recommendedName>
        <fullName evidence="1">Transcription antitermination protein NusB</fullName>
    </recommendedName>
    <alternativeName>
        <fullName evidence="1">Antitermination factor NusB</fullName>
    </alternativeName>
</protein>